<comment type="function">
    <text evidence="1">Responsible for synthesis of pseudouridine from uracil-13 in transfer RNAs.</text>
</comment>
<comment type="catalytic activity">
    <reaction evidence="1">
        <text>uridine(13) in tRNA = pseudouridine(13) in tRNA</text>
        <dbReference type="Rhea" id="RHEA:42540"/>
        <dbReference type="Rhea" id="RHEA-COMP:10105"/>
        <dbReference type="Rhea" id="RHEA-COMP:10106"/>
        <dbReference type="ChEBI" id="CHEBI:65314"/>
        <dbReference type="ChEBI" id="CHEBI:65315"/>
        <dbReference type="EC" id="5.4.99.27"/>
    </reaction>
</comment>
<comment type="similarity">
    <text evidence="1">Belongs to the pseudouridine synthase TruD family.</text>
</comment>
<dbReference type="EC" id="5.4.99.27" evidence="1"/>
<dbReference type="EMBL" id="CP000285">
    <property type="protein sequence ID" value="ABE59983.1"/>
    <property type="molecule type" value="Genomic_DNA"/>
</dbReference>
<dbReference type="RefSeq" id="WP_011507929.1">
    <property type="nucleotide sequence ID" value="NC_007963.1"/>
</dbReference>
<dbReference type="SMR" id="Q1QU75"/>
<dbReference type="STRING" id="290398.Csal_2636"/>
<dbReference type="GeneID" id="95335334"/>
<dbReference type="KEGG" id="csa:Csal_2636"/>
<dbReference type="eggNOG" id="COG0585">
    <property type="taxonomic scope" value="Bacteria"/>
</dbReference>
<dbReference type="HOGENOM" id="CLU_005281_4_0_6"/>
<dbReference type="OrthoDB" id="1550679at2"/>
<dbReference type="Proteomes" id="UP000000239">
    <property type="component" value="Chromosome"/>
</dbReference>
<dbReference type="GO" id="GO:0005829">
    <property type="term" value="C:cytosol"/>
    <property type="evidence" value="ECO:0007669"/>
    <property type="project" value="TreeGrafter"/>
</dbReference>
<dbReference type="GO" id="GO:0003723">
    <property type="term" value="F:RNA binding"/>
    <property type="evidence" value="ECO:0007669"/>
    <property type="project" value="InterPro"/>
</dbReference>
<dbReference type="GO" id="GO:0160150">
    <property type="term" value="F:tRNA pseudouridine(13) synthase activity"/>
    <property type="evidence" value="ECO:0007669"/>
    <property type="project" value="UniProtKB-EC"/>
</dbReference>
<dbReference type="GO" id="GO:0031119">
    <property type="term" value="P:tRNA pseudouridine synthesis"/>
    <property type="evidence" value="ECO:0007669"/>
    <property type="project" value="UniProtKB-UniRule"/>
</dbReference>
<dbReference type="CDD" id="cd02575">
    <property type="entry name" value="PseudoU_synth_EcTruD"/>
    <property type="match status" value="1"/>
</dbReference>
<dbReference type="Gene3D" id="3.30.2350.20">
    <property type="entry name" value="TruD, catalytic domain"/>
    <property type="match status" value="1"/>
</dbReference>
<dbReference type="Gene3D" id="3.30.2340.10">
    <property type="entry name" value="TruD, insertion domain"/>
    <property type="match status" value="1"/>
</dbReference>
<dbReference type="HAMAP" id="MF_01082">
    <property type="entry name" value="TruD"/>
    <property type="match status" value="1"/>
</dbReference>
<dbReference type="InterPro" id="IPR020103">
    <property type="entry name" value="PsdUridine_synth_cat_dom_sf"/>
</dbReference>
<dbReference type="InterPro" id="IPR001656">
    <property type="entry name" value="PsdUridine_synth_TruD"/>
</dbReference>
<dbReference type="InterPro" id="IPR020119">
    <property type="entry name" value="PsdUridine_synth_TruD_CS"/>
</dbReference>
<dbReference type="InterPro" id="IPR011760">
    <property type="entry name" value="PsdUridine_synth_TruD_insert"/>
</dbReference>
<dbReference type="InterPro" id="IPR042214">
    <property type="entry name" value="TruD_catalytic"/>
</dbReference>
<dbReference type="InterPro" id="IPR043165">
    <property type="entry name" value="TruD_insert_sf"/>
</dbReference>
<dbReference type="InterPro" id="IPR050170">
    <property type="entry name" value="TruD_pseudoU_synthase"/>
</dbReference>
<dbReference type="PANTHER" id="PTHR47811">
    <property type="entry name" value="TRNA PSEUDOURIDINE SYNTHASE D"/>
    <property type="match status" value="1"/>
</dbReference>
<dbReference type="PANTHER" id="PTHR47811:SF1">
    <property type="entry name" value="TRNA PSEUDOURIDINE SYNTHASE D"/>
    <property type="match status" value="1"/>
</dbReference>
<dbReference type="Pfam" id="PF01142">
    <property type="entry name" value="TruD"/>
    <property type="match status" value="2"/>
</dbReference>
<dbReference type="SUPFAM" id="SSF55120">
    <property type="entry name" value="Pseudouridine synthase"/>
    <property type="match status" value="1"/>
</dbReference>
<dbReference type="PROSITE" id="PS50984">
    <property type="entry name" value="TRUD"/>
    <property type="match status" value="1"/>
</dbReference>
<dbReference type="PROSITE" id="PS01268">
    <property type="entry name" value="UPF0024"/>
    <property type="match status" value="1"/>
</dbReference>
<gene>
    <name evidence="1" type="primary">truD</name>
    <name type="ordered locus">Csal_2636</name>
</gene>
<sequence>MSETPIWPPRWPRAHGGPLAAGDFRATPEDFVVEEVFDFAPEGQGEHLWLWIEKRDLTTPEAAKRVARACGVRPRDVGYSGLKDRVAVTRQWLSVHLPGREAPAELTATLATSGIAILDARRHPRKLKRGVHRLNRFTLRLTGDIAEHPGLSRQWQTLCEAGVPNYFGPQRFGREGRNLIMARSAFARGWRKRDDPHGMQLSAARSFLFNEVLAARLRTDCWRTPRDGDVLALAGSASRFVTETVDATLLDRARRGDVAPTGPLWGKGRQESGAEVAALEADIMATHAALSQGLEAAGARMDRRPLCLRLETPALRLDEEGGVVVSFGLPRGAFATAVLRELMQHPVL</sequence>
<organism>
    <name type="scientific">Chromohalobacter salexigens (strain ATCC BAA-138 / DSM 3043 / CIP 106854 / NCIMB 13768 / 1H11)</name>
    <dbReference type="NCBI Taxonomy" id="290398"/>
    <lineage>
        <taxon>Bacteria</taxon>
        <taxon>Pseudomonadati</taxon>
        <taxon>Pseudomonadota</taxon>
        <taxon>Gammaproteobacteria</taxon>
        <taxon>Oceanospirillales</taxon>
        <taxon>Halomonadaceae</taxon>
        <taxon>Chromohalobacter</taxon>
    </lineage>
</organism>
<reference key="1">
    <citation type="journal article" date="2011" name="Stand. Genomic Sci.">
        <title>Complete genome sequence of the halophilic and highly halotolerant Chromohalobacter salexigens type strain (1H11(T)).</title>
        <authorList>
            <person name="Copeland A."/>
            <person name="O'Connor K."/>
            <person name="Lucas S."/>
            <person name="Lapidus A."/>
            <person name="Berry K.W."/>
            <person name="Detter J.C."/>
            <person name="Del Rio T.G."/>
            <person name="Hammon N."/>
            <person name="Dalin E."/>
            <person name="Tice H."/>
            <person name="Pitluck S."/>
            <person name="Bruce D."/>
            <person name="Goodwin L."/>
            <person name="Han C."/>
            <person name="Tapia R."/>
            <person name="Saunders E."/>
            <person name="Schmutz J."/>
            <person name="Brettin T."/>
            <person name="Larimer F."/>
            <person name="Land M."/>
            <person name="Hauser L."/>
            <person name="Vargas C."/>
            <person name="Nieto J.J."/>
            <person name="Kyrpides N.C."/>
            <person name="Ivanova N."/>
            <person name="Goker M."/>
            <person name="Klenk H.P."/>
            <person name="Csonka L.N."/>
            <person name="Woyke T."/>
        </authorList>
    </citation>
    <scope>NUCLEOTIDE SEQUENCE [LARGE SCALE GENOMIC DNA]</scope>
    <source>
        <strain>ATCC BAA-138 / DSM 3043 / CIP 106854 / NCIMB 13768 / 1H11</strain>
    </source>
</reference>
<proteinExistence type="inferred from homology"/>
<feature type="chain" id="PRO_1000136828" description="tRNA pseudouridine synthase D">
    <location>
        <begin position="1"/>
        <end position="348"/>
    </location>
</feature>
<feature type="domain" description="TRUD" evidence="1">
    <location>
        <begin position="162"/>
        <end position="308"/>
    </location>
</feature>
<feature type="active site" description="Nucleophile" evidence="1">
    <location>
        <position position="84"/>
    </location>
</feature>
<protein>
    <recommendedName>
        <fullName evidence="1">tRNA pseudouridine synthase D</fullName>
        <ecNumber evidence="1">5.4.99.27</ecNumber>
    </recommendedName>
    <alternativeName>
        <fullName evidence="1">tRNA pseudouridine(13) synthase</fullName>
    </alternativeName>
    <alternativeName>
        <fullName evidence="1">tRNA pseudouridylate synthase D</fullName>
    </alternativeName>
    <alternativeName>
        <fullName evidence="1">tRNA-uridine isomerase D</fullName>
    </alternativeName>
</protein>
<evidence type="ECO:0000255" key="1">
    <source>
        <dbReference type="HAMAP-Rule" id="MF_01082"/>
    </source>
</evidence>
<accession>Q1QU75</accession>
<keyword id="KW-0413">Isomerase</keyword>
<keyword id="KW-1185">Reference proteome</keyword>
<keyword id="KW-0819">tRNA processing</keyword>
<name>TRUD_CHRSD</name>